<keyword id="KW-0479">Metal-binding</keyword>
<keyword id="KW-1185">Reference proteome</keyword>
<keyword id="KW-0862">Zinc</keyword>
<protein>
    <recommendedName>
        <fullName evidence="1">DNA gyrase inhibitor YacG</fullName>
    </recommendedName>
</protein>
<organism>
    <name type="scientific">Salmonella arizonae (strain ATCC BAA-731 / CDC346-86 / RSK2980)</name>
    <dbReference type="NCBI Taxonomy" id="41514"/>
    <lineage>
        <taxon>Bacteria</taxon>
        <taxon>Pseudomonadati</taxon>
        <taxon>Pseudomonadota</taxon>
        <taxon>Gammaproteobacteria</taxon>
        <taxon>Enterobacterales</taxon>
        <taxon>Enterobacteriaceae</taxon>
        <taxon>Salmonella</taxon>
    </lineage>
</organism>
<evidence type="ECO:0000255" key="1">
    <source>
        <dbReference type="HAMAP-Rule" id="MF_00649"/>
    </source>
</evidence>
<proteinExistence type="inferred from homology"/>
<dbReference type="EMBL" id="CP000880">
    <property type="protein sequence ID" value="ABX22704.1"/>
    <property type="molecule type" value="Genomic_DNA"/>
</dbReference>
<dbReference type="SMR" id="A9MQA6"/>
<dbReference type="STRING" id="41514.SARI_02857"/>
<dbReference type="KEGG" id="ses:SARI_02857"/>
<dbReference type="HOGENOM" id="CLU_178280_3_1_6"/>
<dbReference type="Proteomes" id="UP000002084">
    <property type="component" value="Chromosome"/>
</dbReference>
<dbReference type="GO" id="GO:0008657">
    <property type="term" value="F:DNA topoisomerase type II (double strand cut, ATP-hydrolyzing) inhibitor activity"/>
    <property type="evidence" value="ECO:0007669"/>
    <property type="project" value="UniProtKB-UniRule"/>
</dbReference>
<dbReference type="GO" id="GO:0008270">
    <property type="term" value="F:zinc ion binding"/>
    <property type="evidence" value="ECO:0007669"/>
    <property type="project" value="UniProtKB-UniRule"/>
</dbReference>
<dbReference type="GO" id="GO:0006355">
    <property type="term" value="P:regulation of DNA-templated transcription"/>
    <property type="evidence" value="ECO:0007669"/>
    <property type="project" value="InterPro"/>
</dbReference>
<dbReference type="Gene3D" id="3.30.50.10">
    <property type="entry name" value="Erythroid Transcription Factor GATA-1, subunit A"/>
    <property type="match status" value="1"/>
</dbReference>
<dbReference type="HAMAP" id="MF_00649">
    <property type="entry name" value="DNA_gyrase_inhibitor_YacG"/>
    <property type="match status" value="1"/>
</dbReference>
<dbReference type="InterPro" id="IPR005584">
    <property type="entry name" value="DNA_gyrase_inhibitor_YacG"/>
</dbReference>
<dbReference type="InterPro" id="IPR013088">
    <property type="entry name" value="Znf_NHR/GATA"/>
</dbReference>
<dbReference type="NCBIfam" id="NF001638">
    <property type="entry name" value="PRK00418.1"/>
    <property type="match status" value="1"/>
</dbReference>
<dbReference type="PANTHER" id="PTHR36150">
    <property type="entry name" value="DNA GYRASE INHIBITOR YACG"/>
    <property type="match status" value="1"/>
</dbReference>
<dbReference type="PANTHER" id="PTHR36150:SF1">
    <property type="entry name" value="DNA GYRASE INHIBITOR YACG"/>
    <property type="match status" value="1"/>
</dbReference>
<dbReference type="Pfam" id="PF03884">
    <property type="entry name" value="YacG"/>
    <property type="match status" value="1"/>
</dbReference>
<dbReference type="SUPFAM" id="SSF57716">
    <property type="entry name" value="Glucocorticoid receptor-like (DNA-binding domain)"/>
    <property type="match status" value="1"/>
</dbReference>
<name>YACG_SALAR</name>
<comment type="function">
    <text evidence="1">Inhibits all the catalytic activities of DNA gyrase by preventing its interaction with DNA. Acts by binding directly to the C-terminal domain of GyrB, which probably disrupts DNA binding by the gyrase.</text>
</comment>
<comment type="cofactor">
    <cofactor evidence="1">
        <name>Zn(2+)</name>
        <dbReference type="ChEBI" id="CHEBI:29105"/>
    </cofactor>
    <text evidence="1">Binds 1 zinc ion.</text>
</comment>
<comment type="subunit">
    <text evidence="1">Interacts with GyrB.</text>
</comment>
<comment type="similarity">
    <text evidence="1">Belongs to the DNA gyrase inhibitor YacG family.</text>
</comment>
<sequence length="63" mass="6994">MSDVTVVSCPTCGKPVVWGEVSPFRPFCSKRCQLIDLGEWAAEEKRIASSGDLSDSDDWSEER</sequence>
<feature type="chain" id="PRO_1000082725" description="DNA gyrase inhibitor YacG">
    <location>
        <begin position="1"/>
        <end position="63"/>
    </location>
</feature>
<feature type="binding site" evidence="1">
    <location>
        <position position="9"/>
    </location>
    <ligand>
        <name>Zn(2+)</name>
        <dbReference type="ChEBI" id="CHEBI:29105"/>
    </ligand>
</feature>
<feature type="binding site" evidence="1">
    <location>
        <position position="12"/>
    </location>
    <ligand>
        <name>Zn(2+)</name>
        <dbReference type="ChEBI" id="CHEBI:29105"/>
    </ligand>
</feature>
<feature type="binding site" evidence="1">
    <location>
        <position position="28"/>
    </location>
    <ligand>
        <name>Zn(2+)</name>
        <dbReference type="ChEBI" id="CHEBI:29105"/>
    </ligand>
</feature>
<feature type="binding site" evidence="1">
    <location>
        <position position="32"/>
    </location>
    <ligand>
        <name>Zn(2+)</name>
        <dbReference type="ChEBI" id="CHEBI:29105"/>
    </ligand>
</feature>
<gene>
    <name evidence="1" type="primary">yacG</name>
    <name type="ordered locus">SARI_02857</name>
</gene>
<accession>A9MQA6</accession>
<reference key="1">
    <citation type="submission" date="2007-11" db="EMBL/GenBank/DDBJ databases">
        <authorList>
            <consortium name="The Salmonella enterica serovar Arizonae Genome Sequencing Project"/>
            <person name="McClelland M."/>
            <person name="Sanderson E.K."/>
            <person name="Porwollik S."/>
            <person name="Spieth J."/>
            <person name="Clifton W.S."/>
            <person name="Fulton R."/>
            <person name="Chunyan W."/>
            <person name="Wollam A."/>
            <person name="Shah N."/>
            <person name="Pepin K."/>
            <person name="Bhonagiri V."/>
            <person name="Nash W."/>
            <person name="Johnson M."/>
            <person name="Thiruvilangam P."/>
            <person name="Wilson R."/>
        </authorList>
    </citation>
    <scope>NUCLEOTIDE SEQUENCE [LARGE SCALE GENOMIC DNA]</scope>
    <source>
        <strain>ATCC BAA-731 / CDC346-86 / RSK2980</strain>
    </source>
</reference>